<proteinExistence type="inferred from homology"/>
<gene>
    <name evidence="1" type="primary">msrA</name>
    <name type="ordered locus">Lxx06570</name>
</gene>
<organism>
    <name type="scientific">Leifsonia xyli subsp. xyli (strain CTCB07)</name>
    <dbReference type="NCBI Taxonomy" id="281090"/>
    <lineage>
        <taxon>Bacteria</taxon>
        <taxon>Bacillati</taxon>
        <taxon>Actinomycetota</taxon>
        <taxon>Actinomycetes</taxon>
        <taxon>Micrococcales</taxon>
        <taxon>Microbacteriaceae</taxon>
        <taxon>Leifsonia</taxon>
    </lineage>
</organism>
<feature type="chain" id="PRO_1000068333" description="Peptide methionine sulfoxide reductase MsrA">
    <location>
        <begin position="1"/>
        <end position="169"/>
    </location>
</feature>
<feature type="active site" evidence="1">
    <location>
        <position position="11"/>
    </location>
</feature>
<name>MSRA_LEIXX</name>
<evidence type="ECO:0000255" key="1">
    <source>
        <dbReference type="HAMAP-Rule" id="MF_01401"/>
    </source>
</evidence>
<keyword id="KW-0560">Oxidoreductase</keyword>
<keyword id="KW-1185">Reference proteome</keyword>
<protein>
    <recommendedName>
        <fullName evidence="1">Peptide methionine sulfoxide reductase MsrA</fullName>
        <shortName evidence="1">Protein-methionine-S-oxide reductase</shortName>
        <ecNumber evidence="1">1.8.4.11</ecNumber>
    </recommendedName>
    <alternativeName>
        <fullName evidence="1">Peptide-methionine (S)-S-oxide reductase</fullName>
        <shortName evidence="1">Peptide Met(O) reductase</shortName>
    </alternativeName>
</protein>
<reference key="1">
    <citation type="journal article" date="2004" name="Mol. Plant Microbe Interact.">
        <title>The genome sequence of the Gram-positive sugarcane pathogen Leifsonia xyli subsp. xyli.</title>
        <authorList>
            <person name="Monteiro-Vitorello C.B."/>
            <person name="Camargo L.E.A."/>
            <person name="Van Sluys M.A."/>
            <person name="Kitajima J.P."/>
            <person name="Truffi D."/>
            <person name="do Amaral A.M."/>
            <person name="Harakava R."/>
            <person name="de Oliveira J.C.F."/>
            <person name="Wood D."/>
            <person name="de Oliveira M.C."/>
            <person name="Miyaki C.Y."/>
            <person name="Takita M.A."/>
            <person name="da Silva A.C.R."/>
            <person name="Furlan L.R."/>
            <person name="Carraro D.M."/>
            <person name="Camarotte G."/>
            <person name="Almeida N.F. Jr."/>
            <person name="Carrer H."/>
            <person name="Coutinho L.L."/>
            <person name="El-Dorry H.A."/>
            <person name="Ferro M.I.T."/>
            <person name="Gagliardi P.R."/>
            <person name="Giglioti E."/>
            <person name="Goldman M.H.S."/>
            <person name="Goldman G.H."/>
            <person name="Kimura E.T."/>
            <person name="Ferro E.S."/>
            <person name="Kuramae E.E."/>
            <person name="Lemos E.G.M."/>
            <person name="Lemos M.V.F."/>
            <person name="Mauro S.M.Z."/>
            <person name="Machado M.A."/>
            <person name="Marino C.L."/>
            <person name="Menck C.F."/>
            <person name="Nunes L.R."/>
            <person name="Oliveira R.C."/>
            <person name="Pereira G.G."/>
            <person name="Siqueira W."/>
            <person name="de Souza A.A."/>
            <person name="Tsai S.M."/>
            <person name="Zanca A.S."/>
            <person name="Simpson A.J.G."/>
            <person name="Brumbley S.M."/>
            <person name="Setubal J.C."/>
        </authorList>
    </citation>
    <scope>NUCLEOTIDE SEQUENCE [LARGE SCALE GENOMIC DNA]</scope>
    <source>
        <strain>CTCB07</strain>
    </source>
</reference>
<sequence>MTERAILAGGCFWGMQDLIRKRPGVLRTRVGYTGGDVPNATYRNHGSHAEAIEIEFDPSRIGYRDLLEFFFQIHDPSTANRQGNDVGASYRSAIFYEDEEQRRVAEETIAEVDASGLWSGKVVTEVSPAGPFWEAGPEHQDYLERIPWGYTCHFPRPGWTLPKREAAGD</sequence>
<accession>Q6AG94</accession>
<comment type="function">
    <text evidence="1">Has an important function as a repair enzyme for proteins that have been inactivated by oxidation. Catalyzes the reversible oxidation-reduction of methionine sulfoxide in proteins to methionine.</text>
</comment>
<comment type="catalytic activity">
    <reaction evidence="1">
        <text>L-methionyl-[protein] + [thioredoxin]-disulfide + H2O = L-methionyl-(S)-S-oxide-[protein] + [thioredoxin]-dithiol</text>
        <dbReference type="Rhea" id="RHEA:14217"/>
        <dbReference type="Rhea" id="RHEA-COMP:10698"/>
        <dbReference type="Rhea" id="RHEA-COMP:10700"/>
        <dbReference type="Rhea" id="RHEA-COMP:12313"/>
        <dbReference type="Rhea" id="RHEA-COMP:12315"/>
        <dbReference type="ChEBI" id="CHEBI:15377"/>
        <dbReference type="ChEBI" id="CHEBI:16044"/>
        <dbReference type="ChEBI" id="CHEBI:29950"/>
        <dbReference type="ChEBI" id="CHEBI:44120"/>
        <dbReference type="ChEBI" id="CHEBI:50058"/>
        <dbReference type="EC" id="1.8.4.11"/>
    </reaction>
</comment>
<comment type="catalytic activity">
    <reaction evidence="1">
        <text>[thioredoxin]-disulfide + L-methionine + H2O = L-methionine (S)-S-oxide + [thioredoxin]-dithiol</text>
        <dbReference type="Rhea" id="RHEA:19993"/>
        <dbReference type="Rhea" id="RHEA-COMP:10698"/>
        <dbReference type="Rhea" id="RHEA-COMP:10700"/>
        <dbReference type="ChEBI" id="CHEBI:15377"/>
        <dbReference type="ChEBI" id="CHEBI:29950"/>
        <dbReference type="ChEBI" id="CHEBI:50058"/>
        <dbReference type="ChEBI" id="CHEBI:57844"/>
        <dbReference type="ChEBI" id="CHEBI:58772"/>
        <dbReference type="EC" id="1.8.4.11"/>
    </reaction>
</comment>
<comment type="similarity">
    <text evidence="1">Belongs to the MsrA Met sulfoxide reductase family.</text>
</comment>
<dbReference type="EC" id="1.8.4.11" evidence="1"/>
<dbReference type="EMBL" id="AE016822">
    <property type="protein sequence ID" value="AAT88601.1"/>
    <property type="molecule type" value="Genomic_DNA"/>
</dbReference>
<dbReference type="RefSeq" id="WP_011185600.1">
    <property type="nucleotide sequence ID" value="NC_006087.1"/>
</dbReference>
<dbReference type="SMR" id="Q6AG94"/>
<dbReference type="STRING" id="281090.Lxx06570"/>
<dbReference type="KEGG" id="lxx:Lxx06570"/>
<dbReference type="eggNOG" id="COG0225">
    <property type="taxonomic scope" value="Bacteria"/>
</dbReference>
<dbReference type="HOGENOM" id="CLU_031040_10_2_11"/>
<dbReference type="Proteomes" id="UP000001306">
    <property type="component" value="Chromosome"/>
</dbReference>
<dbReference type="GO" id="GO:0033744">
    <property type="term" value="F:L-methionine:thioredoxin-disulfide S-oxidoreductase activity"/>
    <property type="evidence" value="ECO:0007669"/>
    <property type="project" value="RHEA"/>
</dbReference>
<dbReference type="GO" id="GO:0008113">
    <property type="term" value="F:peptide-methionine (S)-S-oxide reductase activity"/>
    <property type="evidence" value="ECO:0007669"/>
    <property type="project" value="UniProtKB-UniRule"/>
</dbReference>
<dbReference type="GO" id="GO:0036211">
    <property type="term" value="P:protein modification process"/>
    <property type="evidence" value="ECO:0007669"/>
    <property type="project" value="UniProtKB-UniRule"/>
</dbReference>
<dbReference type="FunFam" id="3.30.1060.10:FF:000005">
    <property type="entry name" value="Peptide methionine sulfoxide reductase MsrA"/>
    <property type="match status" value="1"/>
</dbReference>
<dbReference type="Gene3D" id="3.30.1060.10">
    <property type="entry name" value="Peptide methionine sulphoxide reductase MsrA"/>
    <property type="match status" value="1"/>
</dbReference>
<dbReference type="HAMAP" id="MF_01401">
    <property type="entry name" value="MsrA"/>
    <property type="match status" value="1"/>
</dbReference>
<dbReference type="InterPro" id="IPR002569">
    <property type="entry name" value="Met_Sox_Rdtase_MsrA_dom"/>
</dbReference>
<dbReference type="InterPro" id="IPR036509">
    <property type="entry name" value="Met_Sox_Rdtase_MsrA_sf"/>
</dbReference>
<dbReference type="NCBIfam" id="TIGR00401">
    <property type="entry name" value="msrA"/>
    <property type="match status" value="1"/>
</dbReference>
<dbReference type="PANTHER" id="PTHR43774">
    <property type="entry name" value="PEPTIDE METHIONINE SULFOXIDE REDUCTASE"/>
    <property type="match status" value="1"/>
</dbReference>
<dbReference type="PANTHER" id="PTHR43774:SF1">
    <property type="entry name" value="PEPTIDE METHIONINE SULFOXIDE REDUCTASE MSRA 2"/>
    <property type="match status" value="1"/>
</dbReference>
<dbReference type="Pfam" id="PF01625">
    <property type="entry name" value="PMSR"/>
    <property type="match status" value="1"/>
</dbReference>
<dbReference type="SUPFAM" id="SSF55068">
    <property type="entry name" value="Peptide methionine sulfoxide reductase"/>
    <property type="match status" value="1"/>
</dbReference>